<reference key="1">
    <citation type="submission" date="1994-01" db="EMBL/GenBank/DDBJ databases">
        <title>Cloning, sequence analysis, expression in E. coli, and genome organization of some Calvin cycle genes from Nitrobacter vulgaris T3.</title>
        <authorList>
            <person name="Strecker M."/>
            <person name="Sickinger E."/>
            <person name="English R.S."/>
            <person name="Shively J.M."/>
            <person name="Bock E."/>
        </authorList>
    </citation>
    <scope>NUCLEOTIDE SEQUENCE [GENOMIC DNA]</scope>
    <source>
        <strain>T3</strain>
    </source>
</reference>
<proteinExistence type="predicted"/>
<dbReference type="EMBL" id="L22884">
    <property type="protein sequence ID" value="AAA25507.1"/>
    <property type="molecule type" value="Genomic_DNA"/>
</dbReference>
<dbReference type="SMR" id="P37102"/>
<dbReference type="STRING" id="29421.B2M20_17175"/>
<dbReference type="GO" id="GO:0019253">
    <property type="term" value="P:reductive pentose-phosphate cycle"/>
    <property type="evidence" value="ECO:0007669"/>
    <property type="project" value="UniProtKB-KW"/>
</dbReference>
<keyword id="KW-0113">Calvin cycle</keyword>
<keyword id="KW-0602">Photosynthesis</keyword>
<protein>
    <recommendedName>
        <fullName>Fructose-1,6-/sedoheptulose-1,7-bisphosphate aldolase</fullName>
    </recommendedName>
</protein>
<gene>
    <name type="primary">cbbA</name>
</gene>
<accession>P37102</accession>
<sequence length="36" mass="3985">MARITLRQLLDHAAEHGYGVPAFQHQQYGAGACIME</sequence>
<organism>
    <name type="scientific">Nitrobacter vulgaris</name>
    <dbReference type="NCBI Taxonomy" id="29421"/>
    <lineage>
        <taxon>Bacteria</taxon>
        <taxon>Pseudomonadati</taxon>
        <taxon>Pseudomonadota</taxon>
        <taxon>Alphaproteobacteria</taxon>
        <taxon>Hyphomicrobiales</taxon>
        <taxon>Nitrobacteraceae</taxon>
        <taxon>Nitrobacter</taxon>
    </lineage>
</organism>
<name>CBBA_NITVU</name>
<feature type="chain" id="PRO_0000089367" description="Fructose-1,6-/sedoheptulose-1,7-bisphosphate aldolase">
    <location>
        <begin position="1"/>
        <end position="36" status="greater than"/>
    </location>
</feature>
<feature type="non-terminal residue">
    <location>
        <position position="36"/>
    </location>
</feature>